<feature type="chain" id="PRO_0000237364" description="Glutamate--tRNA ligase">
    <location>
        <begin position="1"/>
        <end position="470"/>
    </location>
</feature>
<feature type="short sequence motif" description="'HIGH' region" evidence="1">
    <location>
        <begin position="12"/>
        <end position="22"/>
    </location>
</feature>
<feature type="short sequence motif" description="'KMSKS' region" evidence="1">
    <location>
        <begin position="236"/>
        <end position="240"/>
    </location>
</feature>
<feature type="binding site" evidence="1">
    <location>
        <position position="103"/>
    </location>
    <ligand>
        <name>Zn(2+)</name>
        <dbReference type="ChEBI" id="CHEBI:29105"/>
    </ligand>
</feature>
<feature type="binding site" evidence="1">
    <location>
        <position position="105"/>
    </location>
    <ligand>
        <name>Zn(2+)</name>
        <dbReference type="ChEBI" id="CHEBI:29105"/>
    </ligand>
</feature>
<feature type="binding site" evidence="1">
    <location>
        <position position="125"/>
    </location>
    <ligand>
        <name>Zn(2+)</name>
        <dbReference type="ChEBI" id="CHEBI:29105"/>
    </ligand>
</feature>
<feature type="binding site" evidence="1">
    <location>
        <position position="127"/>
    </location>
    <ligand>
        <name>Zn(2+)</name>
        <dbReference type="ChEBI" id="CHEBI:29105"/>
    </ligand>
</feature>
<feature type="binding site" evidence="1">
    <location>
        <position position="239"/>
    </location>
    <ligand>
        <name>ATP</name>
        <dbReference type="ChEBI" id="CHEBI:30616"/>
    </ligand>
</feature>
<evidence type="ECO:0000255" key="1">
    <source>
        <dbReference type="HAMAP-Rule" id="MF_00022"/>
    </source>
</evidence>
<proteinExistence type="inferred from homology"/>
<name>SYE_FRACC</name>
<reference key="1">
    <citation type="journal article" date="2007" name="Genome Res.">
        <title>Genome characteristics of facultatively symbiotic Frankia sp. strains reflect host range and host plant biogeography.</title>
        <authorList>
            <person name="Normand P."/>
            <person name="Lapierre P."/>
            <person name="Tisa L.S."/>
            <person name="Gogarten J.P."/>
            <person name="Alloisio N."/>
            <person name="Bagnarol E."/>
            <person name="Bassi C.A."/>
            <person name="Berry A.M."/>
            <person name="Bickhart D.M."/>
            <person name="Choisne N."/>
            <person name="Couloux A."/>
            <person name="Cournoyer B."/>
            <person name="Cruveiller S."/>
            <person name="Daubin V."/>
            <person name="Demange N."/>
            <person name="Francino M.P."/>
            <person name="Goltsman E."/>
            <person name="Huang Y."/>
            <person name="Kopp O.R."/>
            <person name="Labarre L."/>
            <person name="Lapidus A."/>
            <person name="Lavire C."/>
            <person name="Marechal J."/>
            <person name="Martinez M."/>
            <person name="Mastronunzio J.E."/>
            <person name="Mullin B.C."/>
            <person name="Niemann J."/>
            <person name="Pujic P."/>
            <person name="Rawnsley T."/>
            <person name="Rouy Z."/>
            <person name="Schenowitz C."/>
            <person name="Sellstedt A."/>
            <person name="Tavares F."/>
            <person name="Tomkins J.P."/>
            <person name="Vallenet D."/>
            <person name="Valverde C."/>
            <person name="Wall L.G."/>
            <person name="Wang Y."/>
            <person name="Medigue C."/>
            <person name="Benson D.R."/>
        </authorList>
    </citation>
    <scope>NUCLEOTIDE SEQUENCE [LARGE SCALE GENOMIC DNA]</scope>
    <source>
        <strain>DSM 45818 / CECT 9043 / HFP020203 / CcI3</strain>
    </source>
</reference>
<comment type="function">
    <text evidence="1">Catalyzes the attachment of glutamate to tRNA(Glu) in a two-step reaction: glutamate is first activated by ATP to form Glu-AMP and then transferred to the acceptor end of tRNA(Glu).</text>
</comment>
<comment type="catalytic activity">
    <reaction evidence="1">
        <text>tRNA(Glu) + L-glutamate + ATP = L-glutamyl-tRNA(Glu) + AMP + diphosphate</text>
        <dbReference type="Rhea" id="RHEA:23540"/>
        <dbReference type="Rhea" id="RHEA-COMP:9663"/>
        <dbReference type="Rhea" id="RHEA-COMP:9680"/>
        <dbReference type="ChEBI" id="CHEBI:29985"/>
        <dbReference type="ChEBI" id="CHEBI:30616"/>
        <dbReference type="ChEBI" id="CHEBI:33019"/>
        <dbReference type="ChEBI" id="CHEBI:78442"/>
        <dbReference type="ChEBI" id="CHEBI:78520"/>
        <dbReference type="ChEBI" id="CHEBI:456215"/>
        <dbReference type="EC" id="6.1.1.17"/>
    </reaction>
</comment>
<comment type="cofactor">
    <cofactor evidence="1">
        <name>Zn(2+)</name>
        <dbReference type="ChEBI" id="CHEBI:29105"/>
    </cofactor>
    <text evidence="1">Binds 1 zinc ion per subunit.</text>
</comment>
<comment type="subunit">
    <text evidence="1">Monomer.</text>
</comment>
<comment type="subcellular location">
    <subcellularLocation>
        <location evidence="1">Cytoplasm</location>
    </subcellularLocation>
</comment>
<comment type="similarity">
    <text evidence="1">Belongs to the class-I aminoacyl-tRNA synthetase family. Glutamate--tRNA ligase type 1 subfamily.</text>
</comment>
<keyword id="KW-0030">Aminoacyl-tRNA synthetase</keyword>
<keyword id="KW-0067">ATP-binding</keyword>
<keyword id="KW-0963">Cytoplasm</keyword>
<keyword id="KW-0436">Ligase</keyword>
<keyword id="KW-0479">Metal-binding</keyword>
<keyword id="KW-0547">Nucleotide-binding</keyword>
<keyword id="KW-0648">Protein biosynthesis</keyword>
<keyword id="KW-1185">Reference proteome</keyword>
<keyword id="KW-0862">Zinc</keyword>
<protein>
    <recommendedName>
        <fullName evidence="1">Glutamate--tRNA ligase</fullName>
        <ecNumber evidence="1">6.1.1.17</ecNumber>
    </recommendedName>
    <alternativeName>
        <fullName evidence="1">Glutamyl-tRNA synthetase</fullName>
        <shortName evidence="1">GluRS</shortName>
    </alternativeName>
</protein>
<gene>
    <name evidence="1" type="primary">gltX</name>
    <name type="ordered locus">Francci3_3219</name>
</gene>
<sequence>MGSGRVRVRFAPSPTGIFHVGGARSALFNWLVARRAGGDFVLRVEDTDASRNRPEWTDGIISALDWLGISPGGYEGPVLQSSRADRHRAAAERLHAEGLAYYCDCTREALAERTGNAQRGYDGFCRDRGLAPGPGRALRFRTPDDGVTIVEDLIRGTPEFPNETIEDFVVARADGSAVFLLANVVDDLEMGITHVIRGEEHLSNTPKQQLLWAALGADAPPVWAHVPVIVNEKRQKLSKRRDKVALESYRDEGYLPAAMKNYLMLLGWAPPGEDEIVPWETIESTFDLADVKPSPAFFDEKKLKAFNGEYIRRLSVAEFIEAVRPWLSAPAAPWEPAAFDADAFAALAPLAQSRVSVLSEIVPMVDFLFLPEAPIDDAAWAKAMKGPAAELLADVHDLYDKIEWEAETLKAGLTEVGERHGLKLGKAQAPVRVAVTGRSVGLPLFESLEALGRETTLRRLAEARERLTGG</sequence>
<accession>Q2J816</accession>
<dbReference type="EC" id="6.1.1.17" evidence="1"/>
<dbReference type="EMBL" id="CP000249">
    <property type="protein sequence ID" value="ABD12576.1"/>
    <property type="molecule type" value="Genomic_DNA"/>
</dbReference>
<dbReference type="RefSeq" id="WP_011437604.1">
    <property type="nucleotide sequence ID" value="NZ_JENI01000131.1"/>
</dbReference>
<dbReference type="SMR" id="Q2J816"/>
<dbReference type="STRING" id="106370.Francci3_3219"/>
<dbReference type="KEGG" id="fra:Francci3_3219"/>
<dbReference type="eggNOG" id="COG0008">
    <property type="taxonomic scope" value="Bacteria"/>
</dbReference>
<dbReference type="HOGENOM" id="CLU_015768_6_0_11"/>
<dbReference type="OrthoDB" id="9807503at2"/>
<dbReference type="PhylomeDB" id="Q2J816"/>
<dbReference type="Proteomes" id="UP000001937">
    <property type="component" value="Chromosome"/>
</dbReference>
<dbReference type="GO" id="GO:0005829">
    <property type="term" value="C:cytosol"/>
    <property type="evidence" value="ECO:0007669"/>
    <property type="project" value="TreeGrafter"/>
</dbReference>
<dbReference type="GO" id="GO:0005524">
    <property type="term" value="F:ATP binding"/>
    <property type="evidence" value="ECO:0007669"/>
    <property type="project" value="UniProtKB-UniRule"/>
</dbReference>
<dbReference type="GO" id="GO:0004818">
    <property type="term" value="F:glutamate-tRNA ligase activity"/>
    <property type="evidence" value="ECO:0007669"/>
    <property type="project" value="UniProtKB-UniRule"/>
</dbReference>
<dbReference type="GO" id="GO:0000049">
    <property type="term" value="F:tRNA binding"/>
    <property type="evidence" value="ECO:0007669"/>
    <property type="project" value="InterPro"/>
</dbReference>
<dbReference type="GO" id="GO:0008270">
    <property type="term" value="F:zinc ion binding"/>
    <property type="evidence" value="ECO:0007669"/>
    <property type="project" value="UniProtKB-UniRule"/>
</dbReference>
<dbReference type="GO" id="GO:0006424">
    <property type="term" value="P:glutamyl-tRNA aminoacylation"/>
    <property type="evidence" value="ECO:0007669"/>
    <property type="project" value="UniProtKB-UniRule"/>
</dbReference>
<dbReference type="CDD" id="cd00808">
    <property type="entry name" value="GluRS_core"/>
    <property type="match status" value="1"/>
</dbReference>
<dbReference type="Gene3D" id="1.10.10.350">
    <property type="match status" value="1"/>
</dbReference>
<dbReference type="Gene3D" id="1.10.8.70">
    <property type="entry name" value="Glutamate-tRNA synthetase, class I, anticodon-binding domain 1"/>
    <property type="match status" value="1"/>
</dbReference>
<dbReference type="Gene3D" id="3.40.50.620">
    <property type="entry name" value="HUPs"/>
    <property type="match status" value="1"/>
</dbReference>
<dbReference type="HAMAP" id="MF_00022">
    <property type="entry name" value="Glu_tRNA_synth_type1"/>
    <property type="match status" value="1"/>
</dbReference>
<dbReference type="InterPro" id="IPR045462">
    <property type="entry name" value="aa-tRNA-synth_I_cd-bd"/>
</dbReference>
<dbReference type="InterPro" id="IPR020751">
    <property type="entry name" value="aa-tRNA-synth_I_codon-bd_sub2"/>
</dbReference>
<dbReference type="InterPro" id="IPR001412">
    <property type="entry name" value="aa-tRNA-synth_I_CS"/>
</dbReference>
<dbReference type="InterPro" id="IPR008925">
    <property type="entry name" value="aa_tRNA-synth_I_cd-bd_sf"/>
</dbReference>
<dbReference type="InterPro" id="IPR004527">
    <property type="entry name" value="Glu-tRNA-ligase_bac/mito"/>
</dbReference>
<dbReference type="InterPro" id="IPR020752">
    <property type="entry name" value="Glu-tRNA-synth_I_codon-bd_sub1"/>
</dbReference>
<dbReference type="InterPro" id="IPR000924">
    <property type="entry name" value="Glu/Gln-tRNA-synth"/>
</dbReference>
<dbReference type="InterPro" id="IPR020058">
    <property type="entry name" value="Glu/Gln-tRNA-synth_Ib_cat-dom"/>
</dbReference>
<dbReference type="InterPro" id="IPR049940">
    <property type="entry name" value="GluQ/Sye"/>
</dbReference>
<dbReference type="InterPro" id="IPR033910">
    <property type="entry name" value="GluRS_core"/>
</dbReference>
<dbReference type="InterPro" id="IPR014729">
    <property type="entry name" value="Rossmann-like_a/b/a_fold"/>
</dbReference>
<dbReference type="NCBIfam" id="TIGR00464">
    <property type="entry name" value="gltX_bact"/>
    <property type="match status" value="1"/>
</dbReference>
<dbReference type="PANTHER" id="PTHR43311">
    <property type="entry name" value="GLUTAMATE--TRNA LIGASE"/>
    <property type="match status" value="1"/>
</dbReference>
<dbReference type="PANTHER" id="PTHR43311:SF2">
    <property type="entry name" value="GLUTAMATE--TRNA LIGASE, MITOCHONDRIAL-RELATED"/>
    <property type="match status" value="1"/>
</dbReference>
<dbReference type="Pfam" id="PF19269">
    <property type="entry name" value="Anticodon_2"/>
    <property type="match status" value="1"/>
</dbReference>
<dbReference type="Pfam" id="PF00749">
    <property type="entry name" value="tRNA-synt_1c"/>
    <property type="match status" value="1"/>
</dbReference>
<dbReference type="PRINTS" id="PR00987">
    <property type="entry name" value="TRNASYNTHGLU"/>
</dbReference>
<dbReference type="SUPFAM" id="SSF48163">
    <property type="entry name" value="An anticodon-binding domain of class I aminoacyl-tRNA synthetases"/>
    <property type="match status" value="1"/>
</dbReference>
<dbReference type="SUPFAM" id="SSF52374">
    <property type="entry name" value="Nucleotidylyl transferase"/>
    <property type="match status" value="1"/>
</dbReference>
<dbReference type="PROSITE" id="PS00178">
    <property type="entry name" value="AA_TRNA_LIGASE_I"/>
    <property type="match status" value="1"/>
</dbReference>
<organism>
    <name type="scientific">Frankia casuarinae (strain DSM 45818 / CECT 9043 / HFP020203 / CcI3)</name>
    <dbReference type="NCBI Taxonomy" id="106370"/>
    <lineage>
        <taxon>Bacteria</taxon>
        <taxon>Bacillati</taxon>
        <taxon>Actinomycetota</taxon>
        <taxon>Actinomycetes</taxon>
        <taxon>Frankiales</taxon>
        <taxon>Frankiaceae</taxon>
        <taxon>Frankia</taxon>
    </lineage>
</organism>